<name>PDK1L_HUMAN</name>
<keyword id="KW-0067">ATP-binding</keyword>
<keyword id="KW-0418">Kinase</keyword>
<keyword id="KW-0547">Nucleotide-binding</keyword>
<keyword id="KW-0539">Nucleus</keyword>
<keyword id="KW-1267">Proteomics identification</keyword>
<keyword id="KW-1185">Reference proteome</keyword>
<keyword id="KW-0723">Serine/threonine-protein kinase</keyword>
<keyword id="KW-0808">Transferase</keyword>
<accession>Q8N165</accession>
<accession>B2R777</accession>
<accession>D3DPK2</accession>
<accession>Q5T2I0</accession>
<accession>Q8NDB3</accession>
<sequence>MVSSQPKYDLIREVGRGSYGVVYEAVIRKTSARVAVKKIRCHAPENVELALREFWALSSIKSQHPNVIHLEECILQKDGMVQKMSHGSNSSLYLQLVETSLKGEIAFDPRSAYYLWFVMDFCDGGDMNEYLLSRKPNRKTNTSFMLQLSSALAFLHKNQIIHRDLKPDNILISQTRLDTSDLEPTLKVADFGLSKVCSASGQNPEEPVSVNKCFLSTACGTDFYMAPEVWEGHYTAKADIFALGIIIWAMLERITFIDTETKKELLGSYVKQGTEIVPVGEALLENPKMELLIPVKKKSMNGRMKQLIKEMLAANPQDRPDAFELELRLVQIAFKDSSWET</sequence>
<evidence type="ECO:0000255" key="1">
    <source>
        <dbReference type="PROSITE-ProRule" id="PRU00159"/>
    </source>
</evidence>
<evidence type="ECO:0000255" key="2">
    <source>
        <dbReference type="PROSITE-ProRule" id="PRU10027"/>
    </source>
</evidence>
<evidence type="ECO:0000269" key="3">
    <source>
    </source>
</evidence>
<dbReference type="EC" id="2.7.11.1"/>
<dbReference type="EMBL" id="AF411102">
    <property type="protein sequence ID" value="AAN03661.1"/>
    <property type="molecule type" value="mRNA"/>
</dbReference>
<dbReference type="EMBL" id="AK312872">
    <property type="protein sequence ID" value="BAG35724.1"/>
    <property type="molecule type" value="mRNA"/>
</dbReference>
<dbReference type="EMBL" id="AL391650">
    <property type="status" value="NOT_ANNOTATED_CDS"/>
    <property type="molecule type" value="Genomic_DNA"/>
</dbReference>
<dbReference type="EMBL" id="CH471059">
    <property type="protein sequence ID" value="EAX07845.1"/>
    <property type="molecule type" value="Genomic_DNA"/>
</dbReference>
<dbReference type="EMBL" id="CH471059">
    <property type="protein sequence ID" value="EAX07846.1"/>
    <property type="molecule type" value="Genomic_DNA"/>
</dbReference>
<dbReference type="EMBL" id="CH471059">
    <property type="protein sequence ID" value="EAX07847.1"/>
    <property type="molecule type" value="Genomic_DNA"/>
</dbReference>
<dbReference type="EMBL" id="BC028713">
    <property type="protein sequence ID" value="AAH28713.1"/>
    <property type="molecule type" value="mRNA"/>
</dbReference>
<dbReference type="EMBL" id="AL834290">
    <property type="protein sequence ID" value="CAD38964.1"/>
    <property type="molecule type" value="mRNA"/>
</dbReference>
<dbReference type="CCDS" id="CCDS274.1"/>
<dbReference type="RefSeq" id="NP_001230461.1">
    <property type="nucleotide sequence ID" value="NM_001243532.2"/>
</dbReference>
<dbReference type="RefSeq" id="NP_001230462.1">
    <property type="nucleotide sequence ID" value="NM_001243533.2"/>
</dbReference>
<dbReference type="RefSeq" id="NP_690048.1">
    <property type="nucleotide sequence ID" value="NM_152835.5"/>
</dbReference>
<dbReference type="RefSeq" id="XP_005245800.1">
    <property type="nucleotide sequence ID" value="XM_005245743.4"/>
</dbReference>
<dbReference type="SMR" id="Q8N165"/>
<dbReference type="BioGRID" id="127209">
    <property type="interactions" value="19"/>
</dbReference>
<dbReference type="FunCoup" id="Q8N165">
    <property type="interactions" value="2680"/>
</dbReference>
<dbReference type="IntAct" id="Q8N165">
    <property type="interactions" value="17"/>
</dbReference>
<dbReference type="STRING" id="9606.ENSP00000363389"/>
<dbReference type="MoonDB" id="Q8N165">
    <property type="type" value="Predicted"/>
</dbReference>
<dbReference type="iPTMnet" id="Q8N165"/>
<dbReference type="PhosphoSitePlus" id="Q8N165"/>
<dbReference type="BioMuta" id="PDIK1L"/>
<dbReference type="DMDM" id="74762512"/>
<dbReference type="jPOST" id="Q8N165"/>
<dbReference type="MassIVE" id="Q8N165"/>
<dbReference type="PaxDb" id="9606-ENSP00000363389"/>
<dbReference type="PeptideAtlas" id="Q8N165"/>
<dbReference type="ProteomicsDB" id="71568"/>
<dbReference type="Pumba" id="Q8N165"/>
<dbReference type="Antibodypedia" id="30559">
    <property type="antibodies" value="134 antibodies from 23 providers"/>
</dbReference>
<dbReference type="DNASU" id="149420"/>
<dbReference type="Ensembl" id="ENST00000374269.2">
    <property type="protein sequence ID" value="ENSP00000363387.1"/>
    <property type="gene ID" value="ENSG00000175087.10"/>
</dbReference>
<dbReference type="Ensembl" id="ENST00000374271.8">
    <property type="protein sequence ID" value="ENSP00000363389.4"/>
    <property type="gene ID" value="ENSG00000175087.10"/>
</dbReference>
<dbReference type="Ensembl" id="ENST00000619836.4">
    <property type="protein sequence ID" value="ENSP00000480635.1"/>
    <property type="gene ID" value="ENSG00000175087.10"/>
</dbReference>
<dbReference type="GeneID" id="149420"/>
<dbReference type="KEGG" id="hsa:149420"/>
<dbReference type="MANE-Select" id="ENST00000374269.2">
    <property type="protein sequence ID" value="ENSP00000363387.1"/>
    <property type="RefSeq nucleotide sequence ID" value="NM_152835.5"/>
    <property type="RefSeq protein sequence ID" value="NP_690048.1"/>
</dbReference>
<dbReference type="UCSC" id="uc001blj.5">
    <property type="organism name" value="human"/>
</dbReference>
<dbReference type="AGR" id="HGNC:18981"/>
<dbReference type="CTD" id="149420"/>
<dbReference type="DisGeNET" id="149420"/>
<dbReference type="GeneCards" id="PDIK1L"/>
<dbReference type="HGNC" id="HGNC:18981">
    <property type="gene designation" value="PDIK1L"/>
</dbReference>
<dbReference type="HPA" id="ENSG00000175087">
    <property type="expression patterns" value="Low tissue specificity"/>
</dbReference>
<dbReference type="MIM" id="610785">
    <property type="type" value="gene"/>
</dbReference>
<dbReference type="neXtProt" id="NX_Q8N165"/>
<dbReference type="OpenTargets" id="ENSG00000175087"/>
<dbReference type="PharmGKB" id="PA134959839"/>
<dbReference type="VEuPathDB" id="HostDB:ENSG00000175087"/>
<dbReference type="eggNOG" id="KOG0595">
    <property type="taxonomic scope" value="Eukaryota"/>
</dbReference>
<dbReference type="GeneTree" id="ENSGT00940000158412"/>
<dbReference type="HOGENOM" id="CLU_026714_0_0_1"/>
<dbReference type="InParanoid" id="Q8N165"/>
<dbReference type="OMA" id="MVQKMAH"/>
<dbReference type="OrthoDB" id="4062651at2759"/>
<dbReference type="PAN-GO" id="Q8N165">
    <property type="GO annotations" value="3 GO annotations based on evolutionary models"/>
</dbReference>
<dbReference type="PhylomeDB" id="Q8N165"/>
<dbReference type="TreeFam" id="TF105336"/>
<dbReference type="PathwayCommons" id="Q8N165"/>
<dbReference type="SignaLink" id="Q8N165"/>
<dbReference type="SIGNOR" id="Q8N165"/>
<dbReference type="BioGRID-ORCS" id="149420">
    <property type="hits" value="12 hits in 1194 CRISPR screens"/>
</dbReference>
<dbReference type="GenomeRNAi" id="149420"/>
<dbReference type="Pharos" id="Q8N165">
    <property type="development level" value="Tdark"/>
</dbReference>
<dbReference type="PRO" id="PR:Q8N165"/>
<dbReference type="Proteomes" id="UP000005640">
    <property type="component" value="Chromosome 1"/>
</dbReference>
<dbReference type="RNAct" id="Q8N165">
    <property type="molecule type" value="protein"/>
</dbReference>
<dbReference type="Bgee" id="ENSG00000175087">
    <property type="expression patterns" value="Expressed in cortical plate and 181 other cell types or tissues"/>
</dbReference>
<dbReference type="ExpressionAtlas" id="Q8N165">
    <property type="expression patterns" value="baseline and differential"/>
</dbReference>
<dbReference type="GO" id="GO:0005737">
    <property type="term" value="C:cytoplasm"/>
    <property type="evidence" value="ECO:0000318"/>
    <property type="project" value="GO_Central"/>
</dbReference>
<dbReference type="GO" id="GO:0005654">
    <property type="term" value="C:nucleoplasm"/>
    <property type="evidence" value="ECO:0000314"/>
    <property type="project" value="HPA"/>
</dbReference>
<dbReference type="GO" id="GO:0005634">
    <property type="term" value="C:nucleus"/>
    <property type="evidence" value="ECO:0000318"/>
    <property type="project" value="GO_Central"/>
</dbReference>
<dbReference type="GO" id="GO:0005524">
    <property type="term" value="F:ATP binding"/>
    <property type="evidence" value="ECO:0007669"/>
    <property type="project" value="UniProtKB-KW"/>
</dbReference>
<dbReference type="GO" id="GO:0004672">
    <property type="term" value="F:protein kinase activity"/>
    <property type="evidence" value="ECO:0000318"/>
    <property type="project" value="GO_Central"/>
</dbReference>
<dbReference type="GO" id="GO:0106310">
    <property type="term" value="F:protein serine kinase activity"/>
    <property type="evidence" value="ECO:0007669"/>
    <property type="project" value="RHEA"/>
</dbReference>
<dbReference type="GO" id="GO:0004674">
    <property type="term" value="F:protein serine/threonine kinase activity"/>
    <property type="evidence" value="ECO:0007669"/>
    <property type="project" value="UniProtKB-KW"/>
</dbReference>
<dbReference type="GO" id="GO:0010972">
    <property type="term" value="P:negative regulation of G2/M transition of mitotic cell cycle"/>
    <property type="evidence" value="ECO:0000318"/>
    <property type="project" value="GO_Central"/>
</dbReference>
<dbReference type="GO" id="GO:0110031">
    <property type="term" value="P:negative regulation of G2/MI transition of meiotic cell cycle"/>
    <property type="evidence" value="ECO:0000318"/>
    <property type="project" value="GO_Central"/>
</dbReference>
<dbReference type="CDD" id="cd13977">
    <property type="entry name" value="STKc_PDIK1L"/>
    <property type="match status" value="1"/>
</dbReference>
<dbReference type="FunFam" id="1.10.510.10:FF:000174">
    <property type="entry name" value="Serine/threonine-protein kinase PDIK1L"/>
    <property type="match status" value="1"/>
</dbReference>
<dbReference type="FunFam" id="3.30.200.20:FF:000165">
    <property type="entry name" value="Serine/threonine-protein kinase PDIK1L"/>
    <property type="match status" value="1"/>
</dbReference>
<dbReference type="Gene3D" id="3.30.200.20">
    <property type="entry name" value="Phosphorylase Kinase, domain 1"/>
    <property type="match status" value="1"/>
</dbReference>
<dbReference type="Gene3D" id="1.10.510.10">
    <property type="entry name" value="Transferase(Phosphotransferase) domain 1"/>
    <property type="match status" value="1"/>
</dbReference>
<dbReference type="InterPro" id="IPR050339">
    <property type="entry name" value="CC_SR_Kinase"/>
</dbReference>
<dbReference type="InterPro" id="IPR011009">
    <property type="entry name" value="Kinase-like_dom_sf"/>
</dbReference>
<dbReference type="InterPro" id="IPR000719">
    <property type="entry name" value="Prot_kinase_dom"/>
</dbReference>
<dbReference type="InterPro" id="IPR017441">
    <property type="entry name" value="Protein_kinase_ATP_BS"/>
</dbReference>
<dbReference type="InterPro" id="IPR008271">
    <property type="entry name" value="Ser/Thr_kinase_AS"/>
</dbReference>
<dbReference type="PANTHER" id="PTHR11042">
    <property type="entry name" value="EUKARYOTIC TRANSLATION INITIATION FACTOR 2-ALPHA KINASE EIF2-ALPHA KINASE -RELATED"/>
    <property type="match status" value="1"/>
</dbReference>
<dbReference type="PANTHER" id="PTHR11042:SF58">
    <property type="entry name" value="SERINE_THREONINE-PROTEIN KINASE PDIK1L"/>
    <property type="match status" value="1"/>
</dbReference>
<dbReference type="Pfam" id="PF00069">
    <property type="entry name" value="Pkinase"/>
    <property type="match status" value="1"/>
</dbReference>
<dbReference type="PIRSF" id="PIRSF000654">
    <property type="entry name" value="Integrin-linked_kinase"/>
    <property type="match status" value="1"/>
</dbReference>
<dbReference type="SMART" id="SM00220">
    <property type="entry name" value="S_TKc"/>
    <property type="match status" value="1"/>
</dbReference>
<dbReference type="SUPFAM" id="SSF56112">
    <property type="entry name" value="Protein kinase-like (PK-like)"/>
    <property type="match status" value="1"/>
</dbReference>
<dbReference type="PROSITE" id="PS00107">
    <property type="entry name" value="PROTEIN_KINASE_ATP"/>
    <property type="match status" value="1"/>
</dbReference>
<dbReference type="PROSITE" id="PS50011">
    <property type="entry name" value="PROTEIN_KINASE_DOM"/>
    <property type="match status" value="1"/>
</dbReference>
<dbReference type="PROSITE" id="PS00108">
    <property type="entry name" value="PROTEIN_KINASE_ST"/>
    <property type="match status" value="1"/>
</dbReference>
<reference key="1">
    <citation type="journal article" date="2003" name="J. Genet.">
        <title>Molecular cloning and characterization of a novel human kinase gene, PDIK1L.</title>
        <authorList>
            <person name="Guo L."/>
            <person name="Ji C."/>
            <person name="Gu S."/>
            <person name="Ying K."/>
            <person name="Cheng H."/>
            <person name="Ni X."/>
            <person name="Liu J."/>
            <person name="Xie Y."/>
            <person name="Mao Y."/>
        </authorList>
    </citation>
    <scope>NUCLEOTIDE SEQUENCE [MRNA]</scope>
    <scope>TISSUE SPECIFICITY</scope>
    <scope>SUBCELLULAR LOCATION</scope>
    <source>
        <tissue>Fetal brain</tissue>
    </source>
</reference>
<reference key="2">
    <citation type="journal article" date="2004" name="Nat. Genet.">
        <title>Complete sequencing and characterization of 21,243 full-length human cDNAs.</title>
        <authorList>
            <person name="Ota T."/>
            <person name="Suzuki Y."/>
            <person name="Nishikawa T."/>
            <person name="Otsuki T."/>
            <person name="Sugiyama T."/>
            <person name="Irie R."/>
            <person name="Wakamatsu A."/>
            <person name="Hayashi K."/>
            <person name="Sato H."/>
            <person name="Nagai K."/>
            <person name="Kimura K."/>
            <person name="Makita H."/>
            <person name="Sekine M."/>
            <person name="Obayashi M."/>
            <person name="Nishi T."/>
            <person name="Shibahara T."/>
            <person name="Tanaka T."/>
            <person name="Ishii S."/>
            <person name="Yamamoto J."/>
            <person name="Saito K."/>
            <person name="Kawai Y."/>
            <person name="Isono Y."/>
            <person name="Nakamura Y."/>
            <person name="Nagahari K."/>
            <person name="Murakami K."/>
            <person name="Yasuda T."/>
            <person name="Iwayanagi T."/>
            <person name="Wagatsuma M."/>
            <person name="Shiratori A."/>
            <person name="Sudo H."/>
            <person name="Hosoiri T."/>
            <person name="Kaku Y."/>
            <person name="Kodaira H."/>
            <person name="Kondo H."/>
            <person name="Sugawara M."/>
            <person name="Takahashi M."/>
            <person name="Kanda K."/>
            <person name="Yokoi T."/>
            <person name="Furuya T."/>
            <person name="Kikkawa E."/>
            <person name="Omura Y."/>
            <person name="Abe K."/>
            <person name="Kamihara K."/>
            <person name="Katsuta N."/>
            <person name="Sato K."/>
            <person name="Tanikawa M."/>
            <person name="Yamazaki M."/>
            <person name="Ninomiya K."/>
            <person name="Ishibashi T."/>
            <person name="Yamashita H."/>
            <person name="Murakawa K."/>
            <person name="Fujimori K."/>
            <person name="Tanai H."/>
            <person name="Kimata M."/>
            <person name="Watanabe M."/>
            <person name="Hiraoka S."/>
            <person name="Chiba Y."/>
            <person name="Ishida S."/>
            <person name="Ono Y."/>
            <person name="Takiguchi S."/>
            <person name="Watanabe S."/>
            <person name="Yosida M."/>
            <person name="Hotuta T."/>
            <person name="Kusano J."/>
            <person name="Kanehori K."/>
            <person name="Takahashi-Fujii A."/>
            <person name="Hara H."/>
            <person name="Tanase T.-O."/>
            <person name="Nomura Y."/>
            <person name="Togiya S."/>
            <person name="Komai F."/>
            <person name="Hara R."/>
            <person name="Takeuchi K."/>
            <person name="Arita M."/>
            <person name="Imose N."/>
            <person name="Musashino K."/>
            <person name="Yuuki H."/>
            <person name="Oshima A."/>
            <person name="Sasaki N."/>
            <person name="Aotsuka S."/>
            <person name="Yoshikawa Y."/>
            <person name="Matsunawa H."/>
            <person name="Ichihara T."/>
            <person name="Shiohata N."/>
            <person name="Sano S."/>
            <person name="Moriya S."/>
            <person name="Momiyama H."/>
            <person name="Satoh N."/>
            <person name="Takami S."/>
            <person name="Terashima Y."/>
            <person name="Suzuki O."/>
            <person name="Nakagawa S."/>
            <person name="Senoh A."/>
            <person name="Mizoguchi H."/>
            <person name="Goto Y."/>
            <person name="Shimizu F."/>
            <person name="Wakebe H."/>
            <person name="Hishigaki H."/>
            <person name="Watanabe T."/>
            <person name="Sugiyama A."/>
            <person name="Takemoto M."/>
            <person name="Kawakami B."/>
            <person name="Yamazaki M."/>
            <person name="Watanabe K."/>
            <person name="Kumagai A."/>
            <person name="Itakura S."/>
            <person name="Fukuzumi Y."/>
            <person name="Fujimori Y."/>
            <person name="Komiyama M."/>
            <person name="Tashiro H."/>
            <person name="Tanigami A."/>
            <person name="Fujiwara T."/>
            <person name="Ono T."/>
            <person name="Yamada K."/>
            <person name="Fujii Y."/>
            <person name="Ozaki K."/>
            <person name="Hirao M."/>
            <person name="Ohmori Y."/>
            <person name="Kawabata A."/>
            <person name="Hikiji T."/>
            <person name="Kobatake N."/>
            <person name="Inagaki H."/>
            <person name="Ikema Y."/>
            <person name="Okamoto S."/>
            <person name="Okitani R."/>
            <person name="Kawakami T."/>
            <person name="Noguchi S."/>
            <person name="Itoh T."/>
            <person name="Shigeta K."/>
            <person name="Senba T."/>
            <person name="Matsumura K."/>
            <person name="Nakajima Y."/>
            <person name="Mizuno T."/>
            <person name="Morinaga M."/>
            <person name="Sasaki M."/>
            <person name="Togashi T."/>
            <person name="Oyama M."/>
            <person name="Hata H."/>
            <person name="Watanabe M."/>
            <person name="Komatsu T."/>
            <person name="Mizushima-Sugano J."/>
            <person name="Satoh T."/>
            <person name="Shirai Y."/>
            <person name="Takahashi Y."/>
            <person name="Nakagawa K."/>
            <person name="Okumura K."/>
            <person name="Nagase T."/>
            <person name="Nomura N."/>
            <person name="Kikuchi H."/>
            <person name="Masuho Y."/>
            <person name="Yamashita R."/>
            <person name="Nakai K."/>
            <person name="Yada T."/>
            <person name="Nakamura Y."/>
            <person name="Ohara O."/>
            <person name="Isogai T."/>
            <person name="Sugano S."/>
        </authorList>
    </citation>
    <scope>NUCLEOTIDE SEQUENCE [LARGE SCALE MRNA]</scope>
    <source>
        <tissue>Trachea</tissue>
    </source>
</reference>
<reference key="3">
    <citation type="journal article" date="2006" name="Nature">
        <title>The DNA sequence and biological annotation of human chromosome 1.</title>
        <authorList>
            <person name="Gregory S.G."/>
            <person name="Barlow K.F."/>
            <person name="McLay K.E."/>
            <person name="Kaul R."/>
            <person name="Swarbreck D."/>
            <person name="Dunham A."/>
            <person name="Scott C.E."/>
            <person name="Howe K.L."/>
            <person name="Woodfine K."/>
            <person name="Spencer C.C.A."/>
            <person name="Jones M.C."/>
            <person name="Gillson C."/>
            <person name="Searle S."/>
            <person name="Zhou Y."/>
            <person name="Kokocinski F."/>
            <person name="McDonald L."/>
            <person name="Evans R."/>
            <person name="Phillips K."/>
            <person name="Atkinson A."/>
            <person name="Cooper R."/>
            <person name="Jones C."/>
            <person name="Hall R.E."/>
            <person name="Andrews T.D."/>
            <person name="Lloyd C."/>
            <person name="Ainscough R."/>
            <person name="Almeida J.P."/>
            <person name="Ambrose K.D."/>
            <person name="Anderson F."/>
            <person name="Andrew R.W."/>
            <person name="Ashwell R.I.S."/>
            <person name="Aubin K."/>
            <person name="Babbage A.K."/>
            <person name="Bagguley C.L."/>
            <person name="Bailey J."/>
            <person name="Beasley H."/>
            <person name="Bethel G."/>
            <person name="Bird C.P."/>
            <person name="Bray-Allen S."/>
            <person name="Brown J.Y."/>
            <person name="Brown A.J."/>
            <person name="Buckley D."/>
            <person name="Burton J."/>
            <person name="Bye J."/>
            <person name="Carder C."/>
            <person name="Chapman J.C."/>
            <person name="Clark S.Y."/>
            <person name="Clarke G."/>
            <person name="Clee C."/>
            <person name="Cobley V."/>
            <person name="Collier R.E."/>
            <person name="Corby N."/>
            <person name="Coville G.J."/>
            <person name="Davies J."/>
            <person name="Deadman R."/>
            <person name="Dunn M."/>
            <person name="Earthrowl M."/>
            <person name="Ellington A.G."/>
            <person name="Errington H."/>
            <person name="Frankish A."/>
            <person name="Frankland J."/>
            <person name="French L."/>
            <person name="Garner P."/>
            <person name="Garnett J."/>
            <person name="Gay L."/>
            <person name="Ghori M.R.J."/>
            <person name="Gibson R."/>
            <person name="Gilby L.M."/>
            <person name="Gillett W."/>
            <person name="Glithero R.J."/>
            <person name="Grafham D.V."/>
            <person name="Griffiths C."/>
            <person name="Griffiths-Jones S."/>
            <person name="Grocock R."/>
            <person name="Hammond S."/>
            <person name="Harrison E.S.I."/>
            <person name="Hart E."/>
            <person name="Haugen E."/>
            <person name="Heath P.D."/>
            <person name="Holmes S."/>
            <person name="Holt K."/>
            <person name="Howden P.J."/>
            <person name="Hunt A.R."/>
            <person name="Hunt S.E."/>
            <person name="Hunter G."/>
            <person name="Isherwood J."/>
            <person name="James R."/>
            <person name="Johnson C."/>
            <person name="Johnson D."/>
            <person name="Joy A."/>
            <person name="Kay M."/>
            <person name="Kershaw J.K."/>
            <person name="Kibukawa M."/>
            <person name="Kimberley A.M."/>
            <person name="King A."/>
            <person name="Knights A.J."/>
            <person name="Lad H."/>
            <person name="Laird G."/>
            <person name="Lawlor S."/>
            <person name="Leongamornlert D.A."/>
            <person name="Lloyd D.M."/>
            <person name="Loveland J."/>
            <person name="Lovell J."/>
            <person name="Lush M.J."/>
            <person name="Lyne R."/>
            <person name="Martin S."/>
            <person name="Mashreghi-Mohammadi M."/>
            <person name="Matthews L."/>
            <person name="Matthews N.S.W."/>
            <person name="McLaren S."/>
            <person name="Milne S."/>
            <person name="Mistry S."/>
            <person name="Moore M.J.F."/>
            <person name="Nickerson T."/>
            <person name="O'Dell C.N."/>
            <person name="Oliver K."/>
            <person name="Palmeiri A."/>
            <person name="Palmer S.A."/>
            <person name="Parker A."/>
            <person name="Patel D."/>
            <person name="Pearce A.V."/>
            <person name="Peck A.I."/>
            <person name="Pelan S."/>
            <person name="Phelps K."/>
            <person name="Phillimore B.J."/>
            <person name="Plumb R."/>
            <person name="Rajan J."/>
            <person name="Raymond C."/>
            <person name="Rouse G."/>
            <person name="Saenphimmachak C."/>
            <person name="Sehra H.K."/>
            <person name="Sheridan E."/>
            <person name="Shownkeen R."/>
            <person name="Sims S."/>
            <person name="Skuce C.D."/>
            <person name="Smith M."/>
            <person name="Steward C."/>
            <person name="Subramanian S."/>
            <person name="Sycamore N."/>
            <person name="Tracey A."/>
            <person name="Tromans A."/>
            <person name="Van Helmond Z."/>
            <person name="Wall M."/>
            <person name="Wallis J.M."/>
            <person name="White S."/>
            <person name="Whitehead S.L."/>
            <person name="Wilkinson J.E."/>
            <person name="Willey D.L."/>
            <person name="Williams H."/>
            <person name="Wilming L."/>
            <person name="Wray P.W."/>
            <person name="Wu Z."/>
            <person name="Coulson A."/>
            <person name="Vaudin M."/>
            <person name="Sulston J.E."/>
            <person name="Durbin R.M."/>
            <person name="Hubbard T."/>
            <person name="Wooster R."/>
            <person name="Dunham I."/>
            <person name="Carter N.P."/>
            <person name="McVean G."/>
            <person name="Ross M.T."/>
            <person name="Harrow J."/>
            <person name="Olson M.V."/>
            <person name="Beck S."/>
            <person name="Rogers J."/>
            <person name="Bentley D.R."/>
        </authorList>
    </citation>
    <scope>NUCLEOTIDE SEQUENCE [LARGE SCALE GENOMIC DNA]</scope>
</reference>
<reference key="4">
    <citation type="submission" date="2005-09" db="EMBL/GenBank/DDBJ databases">
        <authorList>
            <person name="Mural R.J."/>
            <person name="Istrail S."/>
            <person name="Sutton G.G."/>
            <person name="Florea L."/>
            <person name="Halpern A.L."/>
            <person name="Mobarry C.M."/>
            <person name="Lippert R."/>
            <person name="Walenz B."/>
            <person name="Shatkay H."/>
            <person name="Dew I."/>
            <person name="Miller J.R."/>
            <person name="Flanigan M.J."/>
            <person name="Edwards N.J."/>
            <person name="Bolanos R."/>
            <person name="Fasulo D."/>
            <person name="Halldorsson B.V."/>
            <person name="Hannenhalli S."/>
            <person name="Turner R."/>
            <person name="Yooseph S."/>
            <person name="Lu F."/>
            <person name="Nusskern D.R."/>
            <person name="Shue B.C."/>
            <person name="Zheng X.H."/>
            <person name="Zhong F."/>
            <person name="Delcher A.L."/>
            <person name="Huson D.H."/>
            <person name="Kravitz S.A."/>
            <person name="Mouchard L."/>
            <person name="Reinert K."/>
            <person name="Remington K.A."/>
            <person name="Clark A.G."/>
            <person name="Waterman M.S."/>
            <person name="Eichler E.E."/>
            <person name="Adams M.D."/>
            <person name="Hunkapiller M.W."/>
            <person name="Myers E.W."/>
            <person name="Venter J.C."/>
        </authorList>
    </citation>
    <scope>NUCLEOTIDE SEQUENCE [LARGE SCALE GENOMIC DNA]</scope>
</reference>
<reference key="5">
    <citation type="journal article" date="2004" name="Genome Res.">
        <title>The status, quality, and expansion of the NIH full-length cDNA project: the Mammalian Gene Collection (MGC).</title>
        <authorList>
            <consortium name="The MGC Project Team"/>
        </authorList>
    </citation>
    <scope>NUCLEOTIDE SEQUENCE [LARGE SCALE MRNA]</scope>
    <source>
        <tissue>Testis</tissue>
    </source>
</reference>
<reference key="6">
    <citation type="journal article" date="2007" name="BMC Genomics">
        <title>The full-ORF clone resource of the German cDNA consortium.</title>
        <authorList>
            <person name="Bechtel S."/>
            <person name="Rosenfelder H."/>
            <person name="Duda A."/>
            <person name="Schmidt C.P."/>
            <person name="Ernst U."/>
            <person name="Wellenreuther R."/>
            <person name="Mehrle A."/>
            <person name="Schuster C."/>
            <person name="Bahr A."/>
            <person name="Bloecker H."/>
            <person name="Heubner D."/>
            <person name="Hoerlein A."/>
            <person name="Michel G."/>
            <person name="Wedler H."/>
            <person name="Koehrer K."/>
            <person name="Ottenwaelder B."/>
            <person name="Poustka A."/>
            <person name="Wiemann S."/>
            <person name="Schupp I."/>
        </authorList>
    </citation>
    <scope>NUCLEOTIDE SEQUENCE [LARGE SCALE MRNA] OF 134-341</scope>
    <source>
        <tissue>Lymph node</tissue>
    </source>
</reference>
<feature type="chain" id="PRO_0000086494" description="Serine/threonine-protein kinase PDIK1L">
    <location>
        <begin position="1"/>
        <end position="341"/>
    </location>
</feature>
<feature type="domain" description="Protein kinase" evidence="1">
    <location>
        <begin position="8"/>
        <end position="334"/>
    </location>
</feature>
<feature type="active site" description="Proton acceptor" evidence="1 2">
    <location>
        <position position="164"/>
    </location>
</feature>
<feature type="binding site" evidence="1">
    <location>
        <begin position="14"/>
        <end position="22"/>
    </location>
    <ligand>
        <name>ATP</name>
        <dbReference type="ChEBI" id="CHEBI:30616"/>
    </ligand>
</feature>
<feature type="binding site" evidence="1">
    <location>
        <position position="37"/>
    </location>
    <ligand>
        <name>ATP</name>
        <dbReference type="ChEBI" id="CHEBI:30616"/>
    </ligand>
</feature>
<gene>
    <name type="primary">PDIK1L</name>
    <name type="synonym">CLIK1L</name>
</gene>
<protein>
    <recommendedName>
        <fullName>Serine/threonine-protein kinase PDIK1L</fullName>
        <ecNumber>2.7.11.1</ecNumber>
    </recommendedName>
    <alternativeName>
        <fullName>PDLIM1-interacting kinase 1-like</fullName>
    </alternativeName>
</protein>
<organism>
    <name type="scientific">Homo sapiens</name>
    <name type="common">Human</name>
    <dbReference type="NCBI Taxonomy" id="9606"/>
    <lineage>
        <taxon>Eukaryota</taxon>
        <taxon>Metazoa</taxon>
        <taxon>Chordata</taxon>
        <taxon>Craniata</taxon>
        <taxon>Vertebrata</taxon>
        <taxon>Euteleostomi</taxon>
        <taxon>Mammalia</taxon>
        <taxon>Eutheria</taxon>
        <taxon>Euarchontoglires</taxon>
        <taxon>Primates</taxon>
        <taxon>Haplorrhini</taxon>
        <taxon>Catarrhini</taxon>
        <taxon>Hominidae</taxon>
        <taxon>Homo</taxon>
    </lineage>
</organism>
<proteinExistence type="evidence at protein level"/>
<comment type="catalytic activity">
    <reaction>
        <text>L-seryl-[protein] + ATP = O-phospho-L-seryl-[protein] + ADP + H(+)</text>
        <dbReference type="Rhea" id="RHEA:17989"/>
        <dbReference type="Rhea" id="RHEA-COMP:9863"/>
        <dbReference type="Rhea" id="RHEA-COMP:11604"/>
        <dbReference type="ChEBI" id="CHEBI:15378"/>
        <dbReference type="ChEBI" id="CHEBI:29999"/>
        <dbReference type="ChEBI" id="CHEBI:30616"/>
        <dbReference type="ChEBI" id="CHEBI:83421"/>
        <dbReference type="ChEBI" id="CHEBI:456216"/>
        <dbReference type="EC" id="2.7.11.1"/>
    </reaction>
</comment>
<comment type="catalytic activity">
    <reaction>
        <text>L-threonyl-[protein] + ATP = O-phospho-L-threonyl-[protein] + ADP + H(+)</text>
        <dbReference type="Rhea" id="RHEA:46608"/>
        <dbReference type="Rhea" id="RHEA-COMP:11060"/>
        <dbReference type="Rhea" id="RHEA-COMP:11605"/>
        <dbReference type="ChEBI" id="CHEBI:15378"/>
        <dbReference type="ChEBI" id="CHEBI:30013"/>
        <dbReference type="ChEBI" id="CHEBI:30616"/>
        <dbReference type="ChEBI" id="CHEBI:61977"/>
        <dbReference type="ChEBI" id="CHEBI:456216"/>
        <dbReference type="EC" id="2.7.11.1"/>
    </reaction>
</comment>
<comment type="interaction">
    <interactant intactId="EBI-6423298">
        <id>Q8N165</id>
    </interactant>
    <interactant intactId="EBI-715898">
        <id>Q8IYL3</id>
        <label>C1orf174</label>
    </interactant>
    <organismsDiffer>false</organismsDiffer>
    <experiments>19</experiments>
</comment>
<comment type="interaction">
    <interactant intactId="EBI-6423298">
        <id>Q8N165</id>
    </interactant>
    <interactant intactId="EBI-295634">
        <id>Q16543</id>
        <label>CDC37</label>
    </interactant>
    <organismsDiffer>false</organismsDiffer>
    <experiments>4</experiments>
</comment>
<comment type="interaction">
    <interactant intactId="EBI-6423298">
        <id>Q8N165</id>
    </interactant>
    <interactant intactId="EBI-10039222">
        <id>Q05D32</id>
        <label>CTDSPL2</label>
    </interactant>
    <organismsDiffer>false</organismsDiffer>
    <experiments>12</experiments>
</comment>
<comment type="interaction">
    <interactant intactId="EBI-6423298">
        <id>Q8N165</id>
    </interactant>
    <interactant intactId="EBI-724310">
        <id>Q15038</id>
        <label>DAZAP2</label>
    </interactant>
    <organismsDiffer>false</organismsDiffer>
    <experiments>3</experiments>
</comment>
<comment type="interaction">
    <interactant intactId="EBI-6423298">
        <id>Q8N165</id>
    </interactant>
    <interactant intactId="EBI-352572">
        <id>P08238</id>
        <label>HSP90AB1</label>
    </interactant>
    <organismsDiffer>false</organismsDiffer>
    <experiments>4</experiments>
</comment>
<comment type="subcellular location">
    <subcellularLocation>
        <location evidence="3">Nucleus</location>
    </subcellularLocation>
</comment>
<comment type="tissue specificity">
    <text evidence="3">Expressed in liver, kidney, pancreas, spleen, thymus and prostate.</text>
</comment>
<comment type="similarity">
    <text evidence="1">Belongs to the protein kinase superfamily. Ser/Thr protein kinase family.</text>
</comment>